<comment type="function">
    <text evidence="2">One of the essential components for the initiation of protein synthesis. Stabilizes the binding of IF-2 and IF-3 on the 30S subunit to which N-formylmethionyl-tRNA(fMet) subsequently binds. Helps modulate mRNA selection, yielding the 30S pre-initiation complex (PIC). Upon addition of the 50S ribosomal subunit IF-1, IF-2 and IF-3 are released leaving the mature 70S translation initiation complex.</text>
</comment>
<comment type="subunit">
    <text evidence="2">Component of the 30S ribosomal translation pre-initiation complex which assembles on the 30S ribosome in the order IF-2 and IF-3, IF-1 and N-formylmethionyl-tRNA(fMet); mRNA recruitment can occur at any time during PIC assembly.</text>
</comment>
<comment type="subcellular location">
    <subcellularLocation>
        <location evidence="1">Plastid</location>
        <location evidence="1">Chloroplast</location>
    </subcellularLocation>
</comment>
<comment type="similarity">
    <text evidence="5">Belongs to the IF-1 family.</text>
</comment>
<name>IF1C_MESCR</name>
<gene>
    <name type="primary">infA</name>
</gene>
<proteinExistence type="evidence at transcript level"/>
<accession>Q94KR8</accession>
<keyword id="KW-0150">Chloroplast</keyword>
<keyword id="KW-0396">Initiation factor</keyword>
<keyword id="KW-0934">Plastid</keyword>
<keyword id="KW-0648">Protein biosynthesis</keyword>
<keyword id="KW-0809">Transit peptide</keyword>
<protein>
    <recommendedName>
        <fullName>Translation initiation factor IF-1, chloroplastic</fullName>
    </recommendedName>
</protein>
<dbReference type="EMBL" id="AF347665">
    <property type="protein sequence ID" value="AAK38869.1"/>
    <property type="molecule type" value="mRNA"/>
</dbReference>
<dbReference type="SMR" id="Q94KR8"/>
<dbReference type="GO" id="GO:0009507">
    <property type="term" value="C:chloroplast"/>
    <property type="evidence" value="ECO:0007669"/>
    <property type="project" value="UniProtKB-SubCell"/>
</dbReference>
<dbReference type="GO" id="GO:0005829">
    <property type="term" value="C:cytosol"/>
    <property type="evidence" value="ECO:0007669"/>
    <property type="project" value="TreeGrafter"/>
</dbReference>
<dbReference type="GO" id="GO:0043022">
    <property type="term" value="F:ribosome binding"/>
    <property type="evidence" value="ECO:0007669"/>
    <property type="project" value="TreeGrafter"/>
</dbReference>
<dbReference type="GO" id="GO:0003723">
    <property type="term" value="F:RNA binding"/>
    <property type="evidence" value="ECO:0007669"/>
    <property type="project" value="InterPro"/>
</dbReference>
<dbReference type="GO" id="GO:0003743">
    <property type="term" value="F:translation initiation factor activity"/>
    <property type="evidence" value="ECO:0007669"/>
    <property type="project" value="UniProtKB-KW"/>
</dbReference>
<dbReference type="CDD" id="cd04451">
    <property type="entry name" value="S1_IF1"/>
    <property type="match status" value="1"/>
</dbReference>
<dbReference type="FunFam" id="2.40.50.140:FF:000002">
    <property type="entry name" value="Translation initiation factor IF-1"/>
    <property type="match status" value="1"/>
</dbReference>
<dbReference type="Gene3D" id="2.40.50.140">
    <property type="entry name" value="Nucleic acid-binding proteins"/>
    <property type="match status" value="1"/>
</dbReference>
<dbReference type="HAMAP" id="MF_00075">
    <property type="entry name" value="IF_1"/>
    <property type="match status" value="1"/>
</dbReference>
<dbReference type="InterPro" id="IPR012340">
    <property type="entry name" value="NA-bd_OB-fold"/>
</dbReference>
<dbReference type="InterPro" id="IPR006196">
    <property type="entry name" value="RNA-binding_domain_S1_IF1"/>
</dbReference>
<dbReference type="InterPro" id="IPR004368">
    <property type="entry name" value="TIF_IF1"/>
</dbReference>
<dbReference type="NCBIfam" id="TIGR00008">
    <property type="entry name" value="infA"/>
    <property type="match status" value="1"/>
</dbReference>
<dbReference type="PANTHER" id="PTHR33370">
    <property type="entry name" value="TRANSLATION INITIATION FACTOR IF-1, CHLOROPLASTIC"/>
    <property type="match status" value="1"/>
</dbReference>
<dbReference type="PANTHER" id="PTHR33370:SF1">
    <property type="entry name" value="TRANSLATION INITIATION FACTOR IF-1, CHLOROPLASTIC"/>
    <property type="match status" value="1"/>
</dbReference>
<dbReference type="Pfam" id="PF01176">
    <property type="entry name" value="eIF-1a"/>
    <property type="match status" value="1"/>
</dbReference>
<dbReference type="SUPFAM" id="SSF50249">
    <property type="entry name" value="Nucleic acid-binding proteins"/>
    <property type="match status" value="1"/>
</dbReference>
<dbReference type="PROSITE" id="PS50832">
    <property type="entry name" value="S1_IF1_TYPE"/>
    <property type="match status" value="1"/>
</dbReference>
<reference key="1">
    <citation type="journal article" date="2001" name="Plant Cell">
        <title>Many parallel losses of infA from chloroplast DNA during angiosperm evolution with multiple independent transfers to the nucleus.</title>
        <authorList>
            <person name="Millen R.S."/>
            <person name="Olmstead R.G."/>
            <person name="Adams K.L."/>
            <person name="Palmer J.D."/>
            <person name="Lao N.T."/>
            <person name="Heggie L."/>
            <person name="Kavanagh T.A."/>
            <person name="Hibberd J.M."/>
            <person name="Gray J.C."/>
            <person name="Morden C.W."/>
            <person name="Calie P.J."/>
            <person name="Jermiin L.S."/>
            <person name="Wolfe K.H."/>
        </authorList>
    </citation>
    <scope>NUCLEOTIDE SEQUENCE [MRNA]</scope>
</reference>
<organism>
    <name type="scientific">Mesembryanthemum crystallinum</name>
    <name type="common">Common ice plant</name>
    <name type="synonym">Cryophytum crystallinum</name>
    <dbReference type="NCBI Taxonomy" id="3544"/>
    <lineage>
        <taxon>Eukaryota</taxon>
        <taxon>Viridiplantae</taxon>
        <taxon>Streptophyta</taxon>
        <taxon>Embryophyta</taxon>
        <taxon>Tracheophyta</taxon>
        <taxon>Spermatophyta</taxon>
        <taxon>Magnoliopsida</taxon>
        <taxon>eudicotyledons</taxon>
        <taxon>Gunneridae</taxon>
        <taxon>Pentapetalae</taxon>
        <taxon>Caryophyllales</taxon>
        <taxon>Aizoaceae</taxon>
        <taxon>Mesembryanthemum</taxon>
        <taxon>Mesembryanthemum subgen. Cryophytum</taxon>
    </lineage>
</organism>
<feature type="transit peptide" description="Chloroplast" evidence="3">
    <location>
        <begin position="1"/>
        <end position="49"/>
    </location>
</feature>
<feature type="chain" id="PRO_0000226956" description="Translation initiation factor IF-1, chloroplastic">
    <location>
        <begin position="50"/>
        <end position="156"/>
    </location>
</feature>
<feature type="domain" description="S1-like">
    <location>
        <begin position="72"/>
        <end position="148"/>
    </location>
</feature>
<feature type="region of interest" description="Disordered" evidence="4">
    <location>
        <begin position="1"/>
        <end position="35"/>
    </location>
</feature>
<feature type="compositionally biased region" description="Low complexity" evidence="4">
    <location>
        <begin position="10"/>
        <end position="20"/>
    </location>
</feature>
<evidence type="ECO:0000250" key="1">
    <source>
        <dbReference type="UniProtKB" id="O82499"/>
    </source>
</evidence>
<evidence type="ECO:0000250" key="2">
    <source>
        <dbReference type="UniProtKB" id="P69222"/>
    </source>
</evidence>
<evidence type="ECO:0000255" key="3"/>
<evidence type="ECO:0000256" key="4">
    <source>
        <dbReference type="SAM" id="MobiDB-lite"/>
    </source>
</evidence>
<evidence type="ECO:0000305" key="5"/>
<sequence length="156" mass="17379">MAASLTLMTSPPCSRSSKSPSPSPSPSLSCNQQQQYKPLLHHQWPPQISLKKEKSNESIVAKSPVIAAATKGGSPSVQEQKWIHEGVITESLPNGMFWVKLDNCEDLVLGYISGRIRRSFIRVLPGDRVKIEVSRYDSTRGRITYRLRNNKDATTT</sequence>